<comment type="function">
    <text evidence="1">IGPS catalyzes the conversion of PRFAR and glutamine to IGP, AICAR and glutamate. The HisH subunit catalyzes the hydrolysis of glutamine to glutamate and ammonia as part of the synthesis of IGP and AICAR. The resulting ammonia molecule is channeled to the active site of HisF (By similarity).</text>
</comment>
<comment type="catalytic activity">
    <reaction>
        <text>5-[(5-phospho-1-deoxy-D-ribulos-1-ylimino)methylamino]-1-(5-phospho-beta-D-ribosyl)imidazole-4-carboxamide + L-glutamine = D-erythro-1-(imidazol-4-yl)glycerol 3-phosphate + 5-amino-1-(5-phospho-beta-D-ribosyl)imidazole-4-carboxamide + L-glutamate + H(+)</text>
        <dbReference type="Rhea" id="RHEA:24793"/>
        <dbReference type="ChEBI" id="CHEBI:15378"/>
        <dbReference type="ChEBI" id="CHEBI:29985"/>
        <dbReference type="ChEBI" id="CHEBI:58278"/>
        <dbReference type="ChEBI" id="CHEBI:58359"/>
        <dbReference type="ChEBI" id="CHEBI:58475"/>
        <dbReference type="ChEBI" id="CHEBI:58525"/>
        <dbReference type="EC" id="4.3.2.10"/>
    </reaction>
</comment>
<comment type="catalytic activity">
    <reaction>
        <text>L-glutamine + H2O = L-glutamate + NH4(+)</text>
        <dbReference type="Rhea" id="RHEA:15889"/>
        <dbReference type="ChEBI" id="CHEBI:15377"/>
        <dbReference type="ChEBI" id="CHEBI:28938"/>
        <dbReference type="ChEBI" id="CHEBI:29985"/>
        <dbReference type="ChEBI" id="CHEBI:58359"/>
        <dbReference type="EC" id="3.5.1.2"/>
    </reaction>
</comment>
<comment type="pathway">
    <text>Amino-acid biosynthesis; L-histidine biosynthesis; L-histidine from 5-phospho-alpha-D-ribose 1-diphosphate: step 5/9.</text>
</comment>
<comment type="subunit">
    <text evidence="1">Heterodimer of HisH and HisF.</text>
</comment>
<comment type="subcellular location">
    <subcellularLocation>
        <location evidence="1">Cytoplasm</location>
    </subcellularLocation>
</comment>
<comment type="induction">
    <text evidence="2">Down-regulated in response to the thiol oxidant diamide.</text>
</comment>
<protein>
    <recommendedName>
        <fullName>Imidazole glycerol phosphate synthase subunit HisH</fullName>
        <ecNumber>4.3.2.10</ecNumber>
    </recommendedName>
    <alternativeName>
        <fullName>IGP synthase glutaminase subunit</fullName>
        <ecNumber>3.5.1.2</ecNumber>
    </alternativeName>
    <alternativeName>
        <fullName>IGP synthase subunit HisH</fullName>
    </alternativeName>
    <alternativeName>
        <fullName>ImGP synthase subunit HisH</fullName>
        <shortName>IGPS subunit HisH</shortName>
    </alternativeName>
</protein>
<gene>
    <name type="primary">hisH</name>
    <name type="ordered locus">BQ2027_MB1628</name>
</gene>
<accession>P59957</accession>
<accession>A0A1R3XYS6</accession>
<accession>X2BHZ9</accession>
<sequence length="206" mass="21446">MTAKSVVVLDYGSGNLRSAQRALQRVGAEVEVTADTDAAMTADGLVVPGVGAFAACMAGLRKISGERIIAERVAAGRPVLGVCVGMQILFACGVEFGVQTPGCGHWPGAVIRLEAPVIPHMGWNVVDSAAGSALFKGLDVDARFYFVHSYAAQRWEGSPDALLTWATYRAPFLAAVEDGALAATQFHPEKSGDAGAAVLSNWVDGL</sequence>
<proteinExistence type="evidence at protein level"/>
<evidence type="ECO:0000250" key="1"/>
<evidence type="ECO:0000269" key="2">
    <source>
    </source>
</evidence>
<dbReference type="EC" id="4.3.2.10"/>
<dbReference type="EC" id="3.5.1.2"/>
<dbReference type="EMBL" id="LT708304">
    <property type="protein sequence ID" value="SIU00232.1"/>
    <property type="molecule type" value="Genomic_DNA"/>
</dbReference>
<dbReference type="RefSeq" id="NP_855281.1">
    <property type="nucleotide sequence ID" value="NC_002945.3"/>
</dbReference>
<dbReference type="RefSeq" id="WP_003407952.1">
    <property type="nucleotide sequence ID" value="NC_002945.4"/>
</dbReference>
<dbReference type="SMR" id="P59957"/>
<dbReference type="KEGG" id="mbo:BQ2027_MB1628"/>
<dbReference type="PATRIC" id="fig|233413.5.peg.1777"/>
<dbReference type="UniPathway" id="UPA00031">
    <property type="reaction ID" value="UER00010"/>
</dbReference>
<dbReference type="Proteomes" id="UP000001419">
    <property type="component" value="Chromosome"/>
</dbReference>
<dbReference type="GO" id="GO:0005737">
    <property type="term" value="C:cytoplasm"/>
    <property type="evidence" value="ECO:0007669"/>
    <property type="project" value="UniProtKB-SubCell"/>
</dbReference>
<dbReference type="GO" id="GO:0004359">
    <property type="term" value="F:glutaminase activity"/>
    <property type="evidence" value="ECO:0007669"/>
    <property type="project" value="UniProtKB-EC"/>
</dbReference>
<dbReference type="GO" id="GO:0000107">
    <property type="term" value="F:imidazoleglycerol-phosphate synthase activity"/>
    <property type="evidence" value="ECO:0007669"/>
    <property type="project" value="UniProtKB-UniRule"/>
</dbReference>
<dbReference type="GO" id="GO:0016829">
    <property type="term" value="F:lyase activity"/>
    <property type="evidence" value="ECO:0007669"/>
    <property type="project" value="UniProtKB-KW"/>
</dbReference>
<dbReference type="GO" id="GO:0000105">
    <property type="term" value="P:L-histidine biosynthetic process"/>
    <property type="evidence" value="ECO:0007669"/>
    <property type="project" value="UniProtKB-UniRule"/>
</dbReference>
<dbReference type="CDD" id="cd01748">
    <property type="entry name" value="GATase1_IGP_Synthase"/>
    <property type="match status" value="1"/>
</dbReference>
<dbReference type="FunFam" id="3.40.50.880:FF:000056">
    <property type="entry name" value="Imidazole glycerol phosphate synthase subunit HisH"/>
    <property type="match status" value="1"/>
</dbReference>
<dbReference type="Gene3D" id="3.40.50.880">
    <property type="match status" value="1"/>
</dbReference>
<dbReference type="HAMAP" id="MF_00278">
    <property type="entry name" value="HisH"/>
    <property type="match status" value="1"/>
</dbReference>
<dbReference type="InterPro" id="IPR029062">
    <property type="entry name" value="Class_I_gatase-like"/>
</dbReference>
<dbReference type="InterPro" id="IPR017926">
    <property type="entry name" value="GATASE"/>
</dbReference>
<dbReference type="InterPro" id="IPR010139">
    <property type="entry name" value="Imidazole-glycPsynth_HisH"/>
</dbReference>
<dbReference type="NCBIfam" id="TIGR01855">
    <property type="entry name" value="IMP_synth_hisH"/>
    <property type="match status" value="1"/>
</dbReference>
<dbReference type="PANTHER" id="PTHR42701">
    <property type="entry name" value="IMIDAZOLE GLYCEROL PHOSPHATE SYNTHASE SUBUNIT HISH"/>
    <property type="match status" value="1"/>
</dbReference>
<dbReference type="PANTHER" id="PTHR42701:SF1">
    <property type="entry name" value="IMIDAZOLE GLYCEROL PHOSPHATE SYNTHASE SUBUNIT HISH"/>
    <property type="match status" value="1"/>
</dbReference>
<dbReference type="Pfam" id="PF00117">
    <property type="entry name" value="GATase"/>
    <property type="match status" value="1"/>
</dbReference>
<dbReference type="PIRSF" id="PIRSF000495">
    <property type="entry name" value="Amidotransf_hisH"/>
    <property type="match status" value="1"/>
</dbReference>
<dbReference type="SUPFAM" id="SSF52317">
    <property type="entry name" value="Class I glutamine amidotransferase-like"/>
    <property type="match status" value="1"/>
</dbReference>
<dbReference type="PROSITE" id="PS51273">
    <property type="entry name" value="GATASE_TYPE_1"/>
    <property type="match status" value="1"/>
</dbReference>
<feature type="chain" id="PRO_0000152393" description="Imidazole glycerol phosphate synthase subunit HisH">
    <location>
        <begin position="1"/>
        <end position="206"/>
    </location>
</feature>
<feature type="domain" description="Glutamine amidotransferase type-1">
    <location>
        <begin position="5"/>
        <end position="206"/>
    </location>
</feature>
<feature type="active site" description="Nucleophile" evidence="1">
    <location>
        <position position="83"/>
    </location>
</feature>
<feature type="active site" evidence="1">
    <location>
        <position position="187"/>
    </location>
</feature>
<feature type="active site" evidence="1">
    <location>
        <position position="189"/>
    </location>
</feature>
<organism>
    <name type="scientific">Mycobacterium bovis (strain ATCC BAA-935 / AF2122/97)</name>
    <dbReference type="NCBI Taxonomy" id="233413"/>
    <lineage>
        <taxon>Bacteria</taxon>
        <taxon>Bacillati</taxon>
        <taxon>Actinomycetota</taxon>
        <taxon>Actinomycetes</taxon>
        <taxon>Mycobacteriales</taxon>
        <taxon>Mycobacteriaceae</taxon>
        <taxon>Mycobacterium</taxon>
        <taxon>Mycobacterium tuberculosis complex</taxon>
    </lineage>
</organism>
<name>HIS5_MYCBO</name>
<keyword id="KW-0028">Amino-acid biosynthesis</keyword>
<keyword id="KW-0963">Cytoplasm</keyword>
<keyword id="KW-0315">Glutamine amidotransferase</keyword>
<keyword id="KW-0368">Histidine biosynthesis</keyword>
<keyword id="KW-0378">Hydrolase</keyword>
<keyword id="KW-0456">Lyase</keyword>
<keyword id="KW-1185">Reference proteome</keyword>
<reference key="1">
    <citation type="journal article" date="2003" name="Proc. Natl. Acad. Sci. U.S.A.">
        <title>The complete genome sequence of Mycobacterium bovis.</title>
        <authorList>
            <person name="Garnier T."/>
            <person name="Eiglmeier K."/>
            <person name="Camus J.-C."/>
            <person name="Medina N."/>
            <person name="Mansoor H."/>
            <person name="Pryor M."/>
            <person name="Duthoy S."/>
            <person name="Grondin S."/>
            <person name="Lacroix C."/>
            <person name="Monsempe C."/>
            <person name="Simon S."/>
            <person name="Harris B."/>
            <person name="Atkin R."/>
            <person name="Doggett J."/>
            <person name="Mayes R."/>
            <person name="Keating L."/>
            <person name="Wheeler P.R."/>
            <person name="Parkhill J."/>
            <person name="Barrell B.G."/>
            <person name="Cole S.T."/>
            <person name="Gordon S.V."/>
            <person name="Hewinson R.G."/>
        </authorList>
    </citation>
    <scope>NUCLEOTIDE SEQUENCE [LARGE SCALE GENOMIC DNA]</scope>
    <source>
        <strain>ATCC BAA-935 / AF2122/97</strain>
    </source>
</reference>
<reference key="2">
    <citation type="journal article" date="2017" name="Genome Announc.">
        <title>Updated reference genome sequence and annotation of Mycobacterium bovis AF2122/97.</title>
        <authorList>
            <person name="Malone K.M."/>
            <person name="Farrell D."/>
            <person name="Stuber T.P."/>
            <person name="Schubert O.T."/>
            <person name="Aebersold R."/>
            <person name="Robbe-Austerman S."/>
            <person name="Gordon S.V."/>
        </authorList>
    </citation>
    <scope>NUCLEOTIDE SEQUENCE [LARGE SCALE GENOMIC DNA]</scope>
    <scope>GENOME REANNOTATION</scope>
    <source>
        <strain>ATCC BAA-935 / AF2122/97</strain>
    </source>
</reference>
<reference key="3">
    <citation type="journal article" date="2005" name="FEMS Microbiol. Lett.">
        <title>Thiol specific oxidative stress response in Mycobacteria.</title>
        <authorList>
            <person name="Dosanjh N.S."/>
            <person name="Rawat M."/>
            <person name="Chung J.-H."/>
            <person name="Av-Gay Y."/>
        </authorList>
    </citation>
    <scope>IDENTIFICATION BY MASS SPECTROMETRY</scope>
    <scope>INDUCTION</scope>
    <source>
        <strain>BCG / Pasteur</strain>
    </source>
</reference>